<name>A41_LOXAR</name>
<reference key="1">
    <citation type="journal article" date="2009" name="Mol. Biol. Evol.">
        <title>Molecular evolution, functional variation, and proposed nomenclature of the gene family that includes sphingomyelinase D in sicariid spider venoms.</title>
        <authorList>
            <person name="Binford G.J."/>
            <person name="Bodner M.R."/>
            <person name="Cordes M.H."/>
            <person name="Baldwin K.L."/>
            <person name="Rynerson M.R."/>
            <person name="Burns S.N."/>
            <person name="Zobel-Thropp P.A."/>
        </authorList>
    </citation>
    <scope>NUCLEOTIDE SEQUENCE [MRNA]</scope>
    <scope>NOMENCLATURE</scope>
    <source>
        <tissue>Venom gland</tissue>
    </source>
</reference>
<feature type="chain" id="PRO_0000392837" description="Dermonecrotic toxin LarSicTox-alphaIV1">
    <location>
        <begin position="1" status="less than"/>
        <end position="274"/>
    </location>
</feature>
<feature type="active site" evidence="5">
    <location>
        <position position="5"/>
    </location>
</feature>
<feature type="active site" description="Nucleophile" evidence="5">
    <location>
        <position position="41"/>
    </location>
</feature>
<feature type="binding site" evidence="5">
    <location>
        <position position="25"/>
    </location>
    <ligand>
        <name>Mg(2+)</name>
        <dbReference type="ChEBI" id="CHEBI:18420"/>
    </ligand>
</feature>
<feature type="binding site" evidence="5">
    <location>
        <position position="27"/>
    </location>
    <ligand>
        <name>Mg(2+)</name>
        <dbReference type="ChEBI" id="CHEBI:18420"/>
    </ligand>
</feature>
<feature type="binding site" evidence="5">
    <location>
        <position position="85"/>
    </location>
    <ligand>
        <name>Mg(2+)</name>
        <dbReference type="ChEBI" id="CHEBI:18420"/>
    </ligand>
</feature>
<feature type="disulfide bond" evidence="3">
    <location>
        <begin position="45"/>
        <end position="51"/>
    </location>
</feature>
<feature type="disulfide bond" evidence="3">
    <location>
        <begin position="47"/>
        <end position="192"/>
    </location>
</feature>
<feature type="non-terminal residue">
    <location>
        <position position="1"/>
    </location>
</feature>
<evidence type="ECO:0000250" key="1">
    <source>
        <dbReference type="UniProtKB" id="A0A0D4WTV1"/>
    </source>
</evidence>
<evidence type="ECO:0000250" key="2">
    <source>
        <dbReference type="UniProtKB" id="A0A0D4WV12"/>
    </source>
</evidence>
<evidence type="ECO:0000250" key="3">
    <source>
        <dbReference type="UniProtKB" id="P0CE80"/>
    </source>
</evidence>
<evidence type="ECO:0000250" key="4">
    <source>
        <dbReference type="UniProtKB" id="Q4ZFU2"/>
    </source>
</evidence>
<evidence type="ECO:0000250" key="5">
    <source>
        <dbReference type="UniProtKB" id="Q8I914"/>
    </source>
</evidence>
<evidence type="ECO:0000303" key="6">
    <source>
    </source>
</evidence>
<evidence type="ECO:0000305" key="7"/>
<evidence type="ECO:0000305" key="8">
    <source>
    </source>
</evidence>
<comment type="function">
    <text evidence="1 3">Dermonecrotic toxins cleave the phosphodiester linkage between the phosphate and headgroup of certain phospholipids (sphingolipid and lysolipid substrates), forming an alcohol (often choline) and a cyclic phosphate (By similarity). This toxin acts on sphingomyelin (SM) (By similarity). It may also act on ceramide phosphoethanolamine (CPE), lysophosphatidylcholine (LPC) and lysophosphatidylethanolamine (LPE), but not on lysophosphatidylserine (LPS), and lysophosphatidylglycerol (LPG) (By similarity). It acts by transphosphatidylation, releasing exclusively cyclic phosphate products as second products (By similarity). Induces dermonecrosis, hemolysis, increased vascular permeability, edema, inflammatory response, and platelet aggregation (By similarity).</text>
</comment>
<comment type="catalytic activity">
    <reaction evidence="1">
        <text>an N-(acyl)-sphingosylphosphocholine = an N-(acyl)-sphingosyl-1,3-cyclic phosphate + choline</text>
        <dbReference type="Rhea" id="RHEA:60652"/>
        <dbReference type="ChEBI" id="CHEBI:15354"/>
        <dbReference type="ChEBI" id="CHEBI:64583"/>
        <dbReference type="ChEBI" id="CHEBI:143892"/>
    </reaction>
</comment>
<comment type="catalytic activity">
    <reaction evidence="1">
        <text>an N-(acyl)-sphingosylphosphoethanolamine = an N-(acyl)-sphingosyl-1,3-cyclic phosphate + ethanolamine</text>
        <dbReference type="Rhea" id="RHEA:60648"/>
        <dbReference type="ChEBI" id="CHEBI:57603"/>
        <dbReference type="ChEBI" id="CHEBI:143891"/>
        <dbReference type="ChEBI" id="CHEBI:143892"/>
    </reaction>
</comment>
<comment type="catalytic activity">
    <reaction evidence="1">
        <text>a 1-acyl-sn-glycero-3-phosphocholine = a 1-acyl-sn-glycero-2,3-cyclic phosphate + choline</text>
        <dbReference type="Rhea" id="RHEA:60700"/>
        <dbReference type="ChEBI" id="CHEBI:15354"/>
        <dbReference type="ChEBI" id="CHEBI:58168"/>
        <dbReference type="ChEBI" id="CHEBI:143947"/>
    </reaction>
</comment>
<comment type="catalytic activity">
    <reaction evidence="1">
        <text>a 1-acyl-sn-glycero-3-phosphoethanolamine = a 1-acyl-sn-glycero-2,3-cyclic phosphate + ethanolamine</text>
        <dbReference type="Rhea" id="RHEA:60704"/>
        <dbReference type="ChEBI" id="CHEBI:57603"/>
        <dbReference type="ChEBI" id="CHEBI:64381"/>
        <dbReference type="ChEBI" id="CHEBI:143947"/>
    </reaction>
</comment>
<comment type="cofactor">
    <cofactor evidence="5">
        <name>Mg(2+)</name>
        <dbReference type="ChEBI" id="CHEBI:18420"/>
    </cofactor>
    <text evidence="5">Binds 1 Mg(2+) ion per subunit.</text>
</comment>
<comment type="subcellular location">
    <subcellularLocation>
        <location evidence="8">Secreted</location>
    </subcellularLocation>
</comment>
<comment type="tissue specificity">
    <text evidence="8">Expressed by the venom gland.</text>
</comment>
<comment type="similarity">
    <text evidence="7">Belongs to the arthropod phospholipase D family. Class II subfamily.</text>
</comment>
<comment type="caution">
    <text evidence="1 2 4">The most common activity assay for dermonecrotic toxins detects enzymatic activity by monitoring choline release from substrate. Liberation of choline from sphingomyelin (SM) or lysophosphatidylcholine (LPC) is commonly assumed to result from substrate hydrolysis, giving either ceramide-1-phosphate (C1P) or lysophosphatidic acid (LPA), respectively, as a second product. However, two studies from Lajoie and colleagues (2013 and 2015) report the observation of exclusive formation of cyclic phosphate products as second products, resulting from intramolecular transphosphatidylation. Cyclic phosphates have vastly different biological properties from their monoester counterparts, and they may be relevant to the pathology of brown spider envenomation.</text>
</comment>
<accession>C0JB22</accession>
<sequence length="274" mass="31422">WIMGHMVNEIYQIDEFVDLGANSIETDITFDENAVAEYSYHGVPCDCRRWCHKWEYVNDFLNALRRATTPGDSKYRRELVLVVFDLKTGDLSSSTANKGGKLFAQKLLQHYWNGGNNGGRAYIIISIPDIDHYAFISGFRNALKEAGHEELLEKVGYDFSGNDDLNSIRNALHKAGVKDKEHVWQSDGITNCILRGLSRVREAVRNRDSSNGYINKVYYWTIEKYVSVRDALDAGVDGIMTNEPDVIVNVLNEKAYKQRFRLANYDDNPWETYQ</sequence>
<keyword id="KW-0204">Cytolysis</keyword>
<keyword id="KW-1061">Dermonecrotic toxin</keyword>
<keyword id="KW-1015">Disulfide bond</keyword>
<keyword id="KW-0354">Hemolysis</keyword>
<keyword id="KW-0442">Lipid degradation</keyword>
<keyword id="KW-0443">Lipid metabolism</keyword>
<keyword id="KW-0456">Lyase</keyword>
<keyword id="KW-0460">Magnesium</keyword>
<keyword id="KW-0479">Metal-binding</keyword>
<keyword id="KW-0964">Secreted</keyword>
<keyword id="KW-0800">Toxin</keyword>
<protein>
    <recommendedName>
        <fullName evidence="6">Dermonecrotic toxin LarSicTox-alphaIV1</fullName>
        <ecNumber evidence="4">4.6.1.-</ecNumber>
    </recommendedName>
    <alternativeName>
        <fullName>Phospholipase D</fullName>
        <shortName>PLD</shortName>
    </alternativeName>
    <alternativeName>
        <fullName>Sphingomyelin phosphodiesterase D</fullName>
        <shortName>SMD</shortName>
        <shortName>SMase D</shortName>
        <shortName>Sphingomyelinase D</shortName>
    </alternativeName>
</protein>
<organism>
    <name type="scientific">Loxosceles arizonica</name>
    <name type="common">Arizona brown spider</name>
    <dbReference type="NCBI Taxonomy" id="196454"/>
    <lineage>
        <taxon>Eukaryota</taxon>
        <taxon>Metazoa</taxon>
        <taxon>Ecdysozoa</taxon>
        <taxon>Arthropoda</taxon>
        <taxon>Chelicerata</taxon>
        <taxon>Arachnida</taxon>
        <taxon>Araneae</taxon>
        <taxon>Araneomorphae</taxon>
        <taxon>Haplogynae</taxon>
        <taxon>Scytodoidea</taxon>
        <taxon>Sicariidae</taxon>
        <taxon>Loxosceles</taxon>
    </lineage>
</organism>
<proteinExistence type="evidence at transcript level"/>
<dbReference type="EC" id="4.6.1.-" evidence="4"/>
<dbReference type="EMBL" id="FJ171457">
    <property type="protein sequence ID" value="ACN48953.1"/>
    <property type="molecule type" value="mRNA"/>
</dbReference>
<dbReference type="SMR" id="C0JB22"/>
<dbReference type="GO" id="GO:0005576">
    <property type="term" value="C:extracellular region"/>
    <property type="evidence" value="ECO:0007669"/>
    <property type="project" value="UniProtKB-SubCell"/>
</dbReference>
<dbReference type="GO" id="GO:0016829">
    <property type="term" value="F:lyase activity"/>
    <property type="evidence" value="ECO:0007669"/>
    <property type="project" value="UniProtKB-KW"/>
</dbReference>
<dbReference type="GO" id="GO:0046872">
    <property type="term" value="F:metal ion binding"/>
    <property type="evidence" value="ECO:0007669"/>
    <property type="project" value="UniProtKB-KW"/>
</dbReference>
<dbReference type="GO" id="GO:0008081">
    <property type="term" value="F:phosphoric diester hydrolase activity"/>
    <property type="evidence" value="ECO:0007669"/>
    <property type="project" value="InterPro"/>
</dbReference>
<dbReference type="GO" id="GO:0090729">
    <property type="term" value="F:toxin activity"/>
    <property type="evidence" value="ECO:0007669"/>
    <property type="project" value="UniProtKB-KW"/>
</dbReference>
<dbReference type="GO" id="GO:0031640">
    <property type="term" value="P:killing of cells of another organism"/>
    <property type="evidence" value="ECO:0007669"/>
    <property type="project" value="UniProtKB-KW"/>
</dbReference>
<dbReference type="GO" id="GO:0016042">
    <property type="term" value="P:lipid catabolic process"/>
    <property type="evidence" value="ECO:0007669"/>
    <property type="project" value="UniProtKB-KW"/>
</dbReference>
<dbReference type="CDD" id="cd08576">
    <property type="entry name" value="GDPD_like_SMaseD_PLD"/>
    <property type="match status" value="1"/>
</dbReference>
<dbReference type="Gene3D" id="3.20.20.190">
    <property type="entry name" value="Phosphatidylinositol (PI) phosphodiesterase"/>
    <property type="match status" value="1"/>
</dbReference>
<dbReference type="InterPro" id="IPR017946">
    <property type="entry name" value="PLC-like_Pdiesterase_TIM-brl"/>
</dbReference>
<dbReference type="SUPFAM" id="SSF51695">
    <property type="entry name" value="PLC-like phosphodiesterases"/>
    <property type="match status" value="1"/>
</dbReference>